<protein>
    <recommendedName>
        <fullName evidence="5">Temporin-1To</fullName>
    </recommendedName>
    <alternativeName>
        <fullName evidence="3">Temporin-O</fullName>
    </alternativeName>
</protein>
<comment type="function">
    <text evidence="1">Antimicrobial peptide.</text>
</comment>
<comment type="subcellular location">
    <subcellularLocation>
        <location evidence="2">Secreted</location>
    </subcellularLocation>
</comment>
<comment type="tissue specificity">
    <text evidence="5">Expressed by the skin glands.</text>
</comment>
<comment type="mass spectrometry"/>
<comment type="similarity">
    <text evidence="3">Belongs to the frog skin active peptide (FSAP) family. Temporin subfamily.</text>
</comment>
<keyword id="KW-0027">Amidation</keyword>
<keyword id="KW-0878">Amphibian defense peptide</keyword>
<keyword id="KW-0044">Antibiotic</keyword>
<keyword id="KW-0929">Antimicrobial</keyword>
<keyword id="KW-0903">Direct protein sequencing</keyword>
<keyword id="KW-0391">Immunity</keyword>
<keyword id="KW-0399">Innate immunity</keyword>
<keyword id="KW-0964">Secreted</keyword>
<sequence>FLGALVNALRGLL</sequence>
<feature type="peptide" id="PRO_0000456395" description="Temporin-1To" evidence="2">
    <location>
        <begin position="1"/>
        <end position="13"/>
    </location>
</feature>
<feature type="modified residue" description="Leucine amide" evidence="2">
    <location>
        <position position="13"/>
    </location>
</feature>
<feature type="unsure residue" description="L or I" evidence="2">
    <location>
        <position position="2"/>
    </location>
</feature>
<feature type="unsure residue" description="L or I" evidence="2">
    <location>
        <position position="9"/>
    </location>
</feature>
<feature type="unsure residue" description="L or I" evidence="2">
    <location>
        <position position="12"/>
    </location>
</feature>
<feature type="unsure residue" description="L or I" evidence="2">
    <location>
        <position position="13"/>
    </location>
</feature>
<name>TPO_RANTE</name>
<reference evidence="4" key="1">
    <citation type="journal article" date="2021" name="Anal. Bioanal. Chem.">
        <title>Differentiation of Central Slovenian and Moscow populations of Rana temporaria frogs using peptide biomarkers of temporins family.</title>
        <authorList>
            <person name="Samgina T.Y."/>
            <person name="Vasileva I.D."/>
            <person name="Kovalev S.V."/>
            <person name="Trebse P."/>
            <person name="Torkar G."/>
            <person name="Surin A.K."/>
            <person name="Zubarev R.A."/>
            <person name="Lebedev A.T."/>
        </authorList>
    </citation>
    <scope>PROTEIN SEQUENCE</scope>
    <scope>IDENTIFICATION BY MASS SPECTROMETRY</scope>
    <scope>SUBCELLULAR LOCATION</scope>
    <scope>AMIDATION AT LEU-13</scope>
    <source>
        <tissue evidence="3">Skin secretion</tissue>
    </source>
</reference>
<evidence type="ECO:0000250" key="1">
    <source>
        <dbReference type="UniProtKB" id="P79874"/>
    </source>
</evidence>
<evidence type="ECO:0000269" key="2">
    <source>
    </source>
</evidence>
<evidence type="ECO:0000303" key="3">
    <source>
    </source>
</evidence>
<evidence type="ECO:0000305" key="4"/>
<evidence type="ECO:0000305" key="5">
    <source>
    </source>
</evidence>
<organism evidence="3">
    <name type="scientific">Rana temporaria</name>
    <name type="common">European common frog</name>
    <dbReference type="NCBI Taxonomy" id="8407"/>
    <lineage>
        <taxon>Eukaryota</taxon>
        <taxon>Metazoa</taxon>
        <taxon>Chordata</taxon>
        <taxon>Craniata</taxon>
        <taxon>Vertebrata</taxon>
        <taxon>Euteleostomi</taxon>
        <taxon>Amphibia</taxon>
        <taxon>Batrachia</taxon>
        <taxon>Anura</taxon>
        <taxon>Neobatrachia</taxon>
        <taxon>Ranoidea</taxon>
        <taxon>Ranidae</taxon>
        <taxon>Rana</taxon>
        <taxon>Rana</taxon>
    </lineage>
</organism>
<dbReference type="GO" id="GO:0005576">
    <property type="term" value="C:extracellular region"/>
    <property type="evidence" value="ECO:0000314"/>
    <property type="project" value="UniProtKB"/>
</dbReference>
<dbReference type="GO" id="GO:0042742">
    <property type="term" value="P:defense response to bacterium"/>
    <property type="evidence" value="ECO:0007669"/>
    <property type="project" value="UniProtKB-KW"/>
</dbReference>
<dbReference type="GO" id="GO:0045087">
    <property type="term" value="P:innate immune response"/>
    <property type="evidence" value="ECO:0007669"/>
    <property type="project" value="UniProtKB-KW"/>
</dbReference>
<proteinExistence type="evidence at protein level"/>
<accession>C0HM29</accession>